<sequence length="174" mass="19756">MTKLPQTQGVLNFIQKYLYNSTNYNFEDGSTQAINVPYPDSGVYENYILHYPDATSTELLDINIDQLYSEVMVLTDPKIERAYEYILEERDPGTSSTNILVTVGVDDIAAFDGSASSYMHQLQQKYNFRSIVVSIGPNPNYLEVLAESPDWYFTATDSNGKWVAEQISRIICHL</sequence>
<gene>
    <name type="ORF">C18H9.6</name>
</gene>
<keyword id="KW-1185">Reference proteome</keyword>
<proteinExistence type="predicted"/>
<feature type="chain" id="PRO_0000065189" description="Uncharacterized protein C18H9.6">
    <location>
        <begin position="1"/>
        <end position="174"/>
    </location>
</feature>
<name>YQ86_CAEEL</name>
<reference key="1">
    <citation type="journal article" date="1998" name="Science">
        <title>Genome sequence of the nematode C. elegans: a platform for investigating biology.</title>
        <authorList>
            <consortium name="The C. elegans sequencing consortium"/>
        </authorList>
    </citation>
    <scope>NUCLEOTIDE SEQUENCE [LARGE SCALE GENOMIC DNA]</scope>
    <source>
        <strain>Bristol N2</strain>
    </source>
</reference>
<accession>Q09238</accession>
<organism>
    <name type="scientific">Caenorhabditis elegans</name>
    <dbReference type="NCBI Taxonomy" id="6239"/>
    <lineage>
        <taxon>Eukaryota</taxon>
        <taxon>Metazoa</taxon>
        <taxon>Ecdysozoa</taxon>
        <taxon>Nematoda</taxon>
        <taxon>Chromadorea</taxon>
        <taxon>Rhabditida</taxon>
        <taxon>Rhabditina</taxon>
        <taxon>Rhabditomorpha</taxon>
        <taxon>Rhabditoidea</taxon>
        <taxon>Rhabditidae</taxon>
        <taxon>Peloderinae</taxon>
        <taxon>Caenorhabditis</taxon>
    </lineage>
</organism>
<protein>
    <recommendedName>
        <fullName>Uncharacterized protein C18H9.6</fullName>
    </recommendedName>
</protein>
<dbReference type="EMBL" id="FO080625">
    <property type="protein sequence ID" value="CCD65268.1"/>
    <property type="molecule type" value="Genomic_DNA"/>
</dbReference>
<dbReference type="PIR" id="E88188">
    <property type="entry name" value="E88188"/>
</dbReference>
<dbReference type="RefSeq" id="NP_495364.3">
    <property type="nucleotide sequence ID" value="NM_062963.6"/>
</dbReference>
<dbReference type="FunCoup" id="Q09238">
    <property type="interactions" value="442"/>
</dbReference>
<dbReference type="PaxDb" id="6239-C18H9.6"/>
<dbReference type="PeptideAtlas" id="Q09238"/>
<dbReference type="EnsemblMetazoa" id="C18H9.6.1">
    <property type="protein sequence ID" value="C18H9.6.1"/>
    <property type="gene ID" value="WBGene00016004"/>
</dbReference>
<dbReference type="GeneID" id="182809"/>
<dbReference type="KEGG" id="cel:CELE_C18H9.6"/>
<dbReference type="UCSC" id="C18H9.6">
    <property type="organism name" value="c. elegans"/>
</dbReference>
<dbReference type="AGR" id="WB:WBGene00016004"/>
<dbReference type="CTD" id="182809"/>
<dbReference type="WormBase" id="C18H9.6">
    <property type="protein sequence ID" value="CE44820"/>
    <property type="gene ID" value="WBGene00016004"/>
</dbReference>
<dbReference type="eggNOG" id="ENOG502TGNP">
    <property type="taxonomic scope" value="Eukaryota"/>
</dbReference>
<dbReference type="HOGENOM" id="CLU_1541556_0_0_1"/>
<dbReference type="InParanoid" id="Q09238"/>
<dbReference type="OMA" id="AESEDWY"/>
<dbReference type="OrthoDB" id="5799444at2759"/>
<dbReference type="PhylomeDB" id="Q09238"/>
<dbReference type="PRO" id="PR:Q09238"/>
<dbReference type="Proteomes" id="UP000001940">
    <property type="component" value="Chromosome II"/>
</dbReference>
<dbReference type="Bgee" id="WBGene00016004">
    <property type="expression patterns" value="Expressed in adult organism and 4 other cell types or tissues"/>
</dbReference>
<dbReference type="PANTHER" id="PTHR37972:SF3">
    <property type="entry name" value="PROTEIN CBG11222"/>
    <property type="match status" value="1"/>
</dbReference>
<dbReference type="PANTHER" id="PTHR37972">
    <property type="entry name" value="PROTEIN CBG25533"/>
    <property type="match status" value="1"/>
</dbReference>